<organism>
    <name type="scientific">Rhizobium meliloti (strain 1021)</name>
    <name type="common">Ensifer meliloti</name>
    <name type="synonym">Sinorhizobium meliloti</name>
    <dbReference type="NCBI Taxonomy" id="266834"/>
    <lineage>
        <taxon>Bacteria</taxon>
        <taxon>Pseudomonadati</taxon>
        <taxon>Pseudomonadota</taxon>
        <taxon>Alphaproteobacteria</taxon>
        <taxon>Hyphomicrobiales</taxon>
        <taxon>Rhizobiaceae</taxon>
        <taxon>Sinorhizobium/Ensifer group</taxon>
        <taxon>Sinorhizobium</taxon>
    </lineage>
</organism>
<comment type="function">
    <text evidence="1">Synthesizes alpha-1,4-glucan chains using ADP-glucose.</text>
</comment>
<comment type="catalytic activity">
    <reaction>
        <text>[(1-&gt;4)-alpha-D-glucosyl](n) + ADP-alpha-D-glucose = [(1-&gt;4)-alpha-D-glucosyl](n+1) + ADP + H(+)</text>
        <dbReference type="Rhea" id="RHEA:18189"/>
        <dbReference type="Rhea" id="RHEA-COMP:9584"/>
        <dbReference type="Rhea" id="RHEA-COMP:9587"/>
        <dbReference type="ChEBI" id="CHEBI:15378"/>
        <dbReference type="ChEBI" id="CHEBI:15444"/>
        <dbReference type="ChEBI" id="CHEBI:57498"/>
        <dbReference type="ChEBI" id="CHEBI:456216"/>
        <dbReference type="EC" id="2.4.1.21"/>
    </reaction>
</comment>
<comment type="pathway">
    <text>Glycan biosynthesis; glycogen biosynthesis.</text>
</comment>
<comment type="similarity">
    <text evidence="2">Belongs to the glycosyltransferase 1 family. Bacterial/plant glycogen synthase subfamily.</text>
</comment>
<evidence type="ECO:0000250" key="1"/>
<evidence type="ECO:0000305" key="2"/>
<geneLocation type="plasmid">
    <name>pSymB</name>
    <name>megaplasmid 2</name>
</geneLocation>
<accession>P58394</accession>
<sequence length="486" mass="53635">MQILSVTAEIFPLVKTGGLADVAGSLPKALRAHGIHTRSFVPGYPGVMRALSDATPVAEFESLFGERATLIAARAHGLDLFVLDAPAFYDRQGALYVDRHGRDYADNWKRFAAFSLVASQIARGLVPNWRPHIIHAHDWHAAMSLLYLKYAGDDTIPRVLTVHNLAFQGQFPAHYFPELGLPAEAYSIDGVEYYGDIGFLKGGLQAADAITVVSPTYAREIMSPAFGMGLEGVMNERHADVVGIVNGIDLEVWDPSSDPCIEHHYSARVPLRRLPNRQVLLRHFGLPDTCGPIFASVNRLTWQKGMDLLAATAGEIVKNGGTLIIHGQGEEKLEAAFMDLMRRFPQNISVSIGYDEHLAHRIHAGADAMLVPSRFEPCGLTQLYALRYGCVPVVARTGGLSETIIDANDAALHAHVATGIQFAPIDEDGLRHALRRTFRLYRLRRVWEGLRRQGMKTDCSWHRSAARYADLYSELLNPDMRLVGSA</sequence>
<proteinExistence type="inferred from homology"/>
<reference key="1">
    <citation type="journal article" date="2001" name="Proc. Natl. Acad. Sci. U.S.A.">
        <title>The complete sequence of the 1,683-kb pSymB megaplasmid from the N2-fixing endosymbiont Sinorhizobium meliloti.</title>
        <authorList>
            <person name="Finan T.M."/>
            <person name="Weidner S."/>
            <person name="Wong K."/>
            <person name="Buhrmester J."/>
            <person name="Chain P."/>
            <person name="Vorhoelter F.J."/>
            <person name="Hernandez-Lucas I."/>
            <person name="Becker A."/>
            <person name="Cowie A."/>
            <person name="Gouzy J."/>
            <person name="Golding B."/>
            <person name="Puehler A."/>
        </authorList>
    </citation>
    <scope>NUCLEOTIDE SEQUENCE [LARGE SCALE GENOMIC DNA]</scope>
    <source>
        <strain>1021</strain>
    </source>
</reference>
<reference key="2">
    <citation type="journal article" date="2001" name="Science">
        <title>The composite genome of the legume symbiont Sinorhizobium meliloti.</title>
        <authorList>
            <person name="Galibert F."/>
            <person name="Finan T.M."/>
            <person name="Long S.R."/>
            <person name="Puehler A."/>
            <person name="Abola P."/>
            <person name="Ampe F."/>
            <person name="Barloy-Hubler F."/>
            <person name="Barnett M.J."/>
            <person name="Becker A."/>
            <person name="Boistard P."/>
            <person name="Bothe G."/>
            <person name="Boutry M."/>
            <person name="Bowser L."/>
            <person name="Buhrmester J."/>
            <person name="Cadieu E."/>
            <person name="Capela D."/>
            <person name="Chain P."/>
            <person name="Cowie A."/>
            <person name="Davis R.W."/>
            <person name="Dreano S."/>
            <person name="Federspiel N.A."/>
            <person name="Fisher R.F."/>
            <person name="Gloux S."/>
            <person name="Godrie T."/>
            <person name="Goffeau A."/>
            <person name="Golding B."/>
            <person name="Gouzy J."/>
            <person name="Gurjal M."/>
            <person name="Hernandez-Lucas I."/>
            <person name="Hong A."/>
            <person name="Huizar L."/>
            <person name="Hyman R.W."/>
            <person name="Jones T."/>
            <person name="Kahn D."/>
            <person name="Kahn M.L."/>
            <person name="Kalman S."/>
            <person name="Keating D.H."/>
            <person name="Kiss E."/>
            <person name="Komp C."/>
            <person name="Lelaure V."/>
            <person name="Masuy D."/>
            <person name="Palm C."/>
            <person name="Peck M.C."/>
            <person name="Pohl T.M."/>
            <person name="Portetelle D."/>
            <person name="Purnelle B."/>
            <person name="Ramsperger U."/>
            <person name="Surzycki R."/>
            <person name="Thebault P."/>
            <person name="Vandenbol M."/>
            <person name="Vorhoelter F.J."/>
            <person name="Weidner S."/>
            <person name="Wells D.H."/>
            <person name="Wong K."/>
            <person name="Yeh K.-C."/>
            <person name="Batut J."/>
        </authorList>
    </citation>
    <scope>NUCLEOTIDE SEQUENCE [LARGE SCALE GENOMIC DNA]</scope>
    <source>
        <strain>1021</strain>
    </source>
</reference>
<protein>
    <recommendedName>
        <fullName>Glycogen synthase 2</fullName>
        <ecNumber>2.4.1.21</ecNumber>
    </recommendedName>
    <alternativeName>
        <fullName>Starch [bacterial glycogen] synthase 2</fullName>
    </alternativeName>
</protein>
<dbReference type="EC" id="2.4.1.21"/>
<dbReference type="EMBL" id="AL591985">
    <property type="protein sequence ID" value="CAC49811.1"/>
    <property type="molecule type" value="Genomic_DNA"/>
</dbReference>
<dbReference type="PIR" id="C96018">
    <property type="entry name" value="C96018"/>
</dbReference>
<dbReference type="RefSeq" id="NP_437951.1">
    <property type="nucleotide sequence ID" value="NC_003078.1"/>
</dbReference>
<dbReference type="SMR" id="P58394"/>
<dbReference type="CAZy" id="GT5">
    <property type="family name" value="Glycosyltransferase Family 5"/>
</dbReference>
<dbReference type="EnsemblBacteria" id="CAC49811">
    <property type="protein sequence ID" value="CAC49811"/>
    <property type="gene ID" value="SM_b20704"/>
</dbReference>
<dbReference type="KEGG" id="sme:SM_b20704"/>
<dbReference type="PATRIC" id="fig|266834.11.peg.6332"/>
<dbReference type="eggNOG" id="COG0297">
    <property type="taxonomic scope" value="Bacteria"/>
</dbReference>
<dbReference type="HOGENOM" id="CLU_009583_18_4_5"/>
<dbReference type="OrthoDB" id="9808590at2"/>
<dbReference type="UniPathway" id="UPA00164"/>
<dbReference type="PRO" id="PR:P58394"/>
<dbReference type="Proteomes" id="UP000001976">
    <property type="component" value="Plasmid pSymB"/>
</dbReference>
<dbReference type="GO" id="GO:0005829">
    <property type="term" value="C:cytosol"/>
    <property type="evidence" value="ECO:0007669"/>
    <property type="project" value="TreeGrafter"/>
</dbReference>
<dbReference type="GO" id="GO:0009011">
    <property type="term" value="F:alpha-1,4-glucan glucosyltransferase (ADP-glucose donor) activity"/>
    <property type="evidence" value="ECO:0007669"/>
    <property type="project" value="UniProtKB-UniRule"/>
</dbReference>
<dbReference type="GO" id="GO:0004373">
    <property type="term" value="F:alpha-1,4-glucan glucosyltransferase (UDP-glucose donor) activity"/>
    <property type="evidence" value="ECO:0007669"/>
    <property type="project" value="InterPro"/>
</dbReference>
<dbReference type="GO" id="GO:0005978">
    <property type="term" value="P:glycogen biosynthetic process"/>
    <property type="evidence" value="ECO:0007669"/>
    <property type="project" value="UniProtKB-UniRule"/>
</dbReference>
<dbReference type="CDD" id="cd03791">
    <property type="entry name" value="GT5_Glycogen_synthase_DULL1-like"/>
    <property type="match status" value="1"/>
</dbReference>
<dbReference type="Gene3D" id="3.40.50.2000">
    <property type="entry name" value="Glycogen Phosphorylase B"/>
    <property type="match status" value="2"/>
</dbReference>
<dbReference type="HAMAP" id="MF_00484">
    <property type="entry name" value="Glycogen_synth"/>
    <property type="match status" value="1"/>
</dbReference>
<dbReference type="InterPro" id="IPR001296">
    <property type="entry name" value="Glyco_trans_1"/>
</dbReference>
<dbReference type="InterPro" id="IPR011835">
    <property type="entry name" value="GS/SS"/>
</dbReference>
<dbReference type="InterPro" id="IPR013534">
    <property type="entry name" value="Starch_synth_cat_dom"/>
</dbReference>
<dbReference type="NCBIfam" id="TIGR02095">
    <property type="entry name" value="glgA"/>
    <property type="match status" value="1"/>
</dbReference>
<dbReference type="NCBIfam" id="NF001899">
    <property type="entry name" value="PRK00654.1-2"/>
    <property type="match status" value="1"/>
</dbReference>
<dbReference type="PANTHER" id="PTHR45825:SF11">
    <property type="entry name" value="ALPHA AMYLASE DOMAIN-CONTAINING PROTEIN"/>
    <property type="match status" value="1"/>
</dbReference>
<dbReference type="PANTHER" id="PTHR45825">
    <property type="entry name" value="GRANULE-BOUND STARCH SYNTHASE 1, CHLOROPLASTIC/AMYLOPLASTIC"/>
    <property type="match status" value="1"/>
</dbReference>
<dbReference type="Pfam" id="PF08323">
    <property type="entry name" value="Glyco_transf_5"/>
    <property type="match status" value="1"/>
</dbReference>
<dbReference type="Pfam" id="PF00534">
    <property type="entry name" value="Glycos_transf_1"/>
    <property type="match status" value="1"/>
</dbReference>
<dbReference type="SUPFAM" id="SSF53756">
    <property type="entry name" value="UDP-Glycosyltransferase/glycogen phosphorylase"/>
    <property type="match status" value="1"/>
</dbReference>
<gene>
    <name type="primary">glgA2</name>
    <name type="ordered locus">RB1411</name>
    <name type="ORF">SMb20704</name>
</gene>
<keyword id="KW-0320">Glycogen biosynthesis</keyword>
<keyword id="KW-0328">Glycosyltransferase</keyword>
<keyword id="KW-0614">Plasmid</keyword>
<keyword id="KW-1185">Reference proteome</keyword>
<keyword id="KW-0808">Transferase</keyword>
<name>GLGA2_RHIME</name>
<feature type="chain" id="PRO_0000188638" description="Glycogen synthase 2">
    <location>
        <begin position="1"/>
        <end position="486"/>
    </location>
</feature>
<feature type="binding site" evidence="1">
    <location>
        <position position="15"/>
    </location>
    <ligand>
        <name>ADP-alpha-D-glucose</name>
        <dbReference type="ChEBI" id="CHEBI:57498"/>
    </ligand>
</feature>